<dbReference type="EC" id="3.4.21.-"/>
<dbReference type="EMBL" id="L04573">
    <property type="protein sequence ID" value="AAA72300.1"/>
    <property type="molecule type" value="Genomic_RNA"/>
</dbReference>
<dbReference type="PIR" id="JQ1383">
    <property type="entry name" value="JQ1383"/>
</dbReference>
<dbReference type="RefSeq" id="NP_619736.1">
    <property type="nucleotide sequence ID" value="NC_003629.1"/>
</dbReference>
<dbReference type="KEGG" id="vg:940254"/>
<dbReference type="Proteomes" id="UP000000519">
    <property type="component" value="Segment"/>
</dbReference>
<dbReference type="GO" id="GO:0016020">
    <property type="term" value="C:membrane"/>
    <property type="evidence" value="ECO:0007669"/>
    <property type="project" value="UniProtKB-SubCell"/>
</dbReference>
<dbReference type="GO" id="GO:0003723">
    <property type="term" value="F:RNA binding"/>
    <property type="evidence" value="ECO:0007669"/>
    <property type="project" value="UniProtKB-KW"/>
</dbReference>
<dbReference type="GO" id="GO:0004252">
    <property type="term" value="F:serine-type endopeptidase activity"/>
    <property type="evidence" value="ECO:0007669"/>
    <property type="project" value="InterPro"/>
</dbReference>
<dbReference type="GO" id="GO:0070008">
    <property type="term" value="F:serine-type exopeptidase activity"/>
    <property type="evidence" value="ECO:0007669"/>
    <property type="project" value="InterPro"/>
</dbReference>
<dbReference type="GO" id="GO:0006508">
    <property type="term" value="P:proteolysis"/>
    <property type="evidence" value="ECO:0007669"/>
    <property type="project" value="UniProtKB-KW"/>
</dbReference>
<dbReference type="GO" id="GO:0075523">
    <property type="term" value="P:viral translational frameshifting"/>
    <property type="evidence" value="ECO:0007669"/>
    <property type="project" value="UniProtKB-KW"/>
</dbReference>
<dbReference type="InterPro" id="IPR018019">
    <property type="entry name" value="Luteovirus_Orf2"/>
</dbReference>
<dbReference type="InterPro" id="IPR000382">
    <property type="entry name" value="Peptidase_S39B_luteovirus"/>
</dbReference>
<dbReference type="Pfam" id="PF02122">
    <property type="entry name" value="Peptidase_S39"/>
    <property type="match status" value="1"/>
</dbReference>
<dbReference type="PRINTS" id="PR00913">
    <property type="entry name" value="LVIRUSORF2"/>
</dbReference>
<dbReference type="PROSITE" id="PS51868">
    <property type="entry name" value="PEPTIDASE_S39"/>
    <property type="match status" value="1"/>
</dbReference>
<protein>
    <recommendedName>
        <fullName>Protein P1</fullName>
    </recommendedName>
    <alternativeName>
        <fullName>Genome-linked protein precursor</fullName>
    </alternativeName>
    <alternativeName>
        <fullName>ORF1 protein</fullName>
    </alternativeName>
    <component>
        <recommendedName>
            <fullName>Serine protease</fullName>
            <ecNumber>3.4.21.-</ecNumber>
        </recommendedName>
    </component>
    <component>
        <recommendedName>
            <fullName>VPg</fullName>
        </recommendedName>
    </component>
    <component>
        <recommendedName>
            <fullName>P1-C25</fullName>
        </recommendedName>
    </component>
</protein>
<name>P1_PEMVW</name>
<accession>Q84710</accession>
<reference key="1">
    <citation type="journal article" date="1991" name="J. Gen. Virol.">
        <title>The nucleotide sequence and luteovirus-like nature of RNA 1 of an aphid non-transmissible strain of pea enation mosaic virus.</title>
        <authorList>
            <person name="Demler S.A."/>
            <person name="de Zoeten G.A."/>
        </authorList>
    </citation>
    <scope>NUCLEOTIDE SEQUENCE [GENOMIC RNA]</scope>
</reference>
<reference key="2">
    <citation type="journal article" date="1998" name="J. Gen. Virol.">
        <title>Sequencing, genomic localization and initial characterization of the VPg of pea enation mosaic enamovirus.</title>
        <authorList>
            <person name="Wobus C.E."/>
            <person name="Skaf J.S."/>
            <person name="Schultz M.H."/>
            <person name="de Zoeten G.A."/>
        </authorList>
    </citation>
    <scope>CHARACTERIZATION OF VPG</scope>
    <scope>PROTEIN SEQUENCE</scope>
</reference>
<gene>
    <name type="ORF">ORF1</name>
</gene>
<feature type="signal peptide" evidence="2">
    <location>
        <begin position="1"/>
        <end position="33"/>
    </location>
</feature>
<feature type="chain" id="PRO_0000390915" description="Protein P1">
    <location>
        <begin position="34"/>
        <end position="760"/>
    </location>
</feature>
<feature type="chain" id="PRO_0000390916" description="Serine protease" evidence="2">
    <location>
        <begin position="316"/>
        <end position="515"/>
    </location>
</feature>
<feature type="chain" id="PRO_0000390917" description="VPg" evidence="2">
    <location>
        <begin position="516"/>
        <end position="543"/>
    </location>
</feature>
<feature type="chain" id="PRO_0000391318" description="P1-C25" evidence="2">
    <location>
        <begin position="544"/>
        <end position="760"/>
    </location>
</feature>
<feature type="transmembrane region" description="Helical" evidence="2">
    <location>
        <begin position="172"/>
        <end position="192"/>
    </location>
</feature>
<feature type="transmembrane region" description="Helical" evidence="2">
    <location>
        <begin position="194"/>
        <end position="214"/>
    </location>
</feature>
<feature type="transmembrane region" description="Helical" evidence="2">
    <location>
        <begin position="218"/>
        <end position="235"/>
    </location>
</feature>
<feature type="transmembrane region" description="Helical" evidence="2">
    <location>
        <begin position="240"/>
        <end position="260"/>
    </location>
</feature>
<feature type="domain" description="Peptidase S39" evidence="3">
    <location>
        <begin position="318"/>
        <end position="515"/>
    </location>
</feature>
<feature type="region of interest" description="Disordered" evidence="4">
    <location>
        <begin position="572"/>
        <end position="672"/>
    </location>
</feature>
<feature type="region of interest" description="Disordered" evidence="4">
    <location>
        <begin position="684"/>
        <end position="760"/>
    </location>
</feature>
<feature type="compositionally biased region" description="Basic and acidic residues" evidence="4">
    <location>
        <begin position="621"/>
        <end position="643"/>
    </location>
</feature>
<feature type="active site" description="For protease activity" evidence="3">
    <location>
        <position position="366"/>
    </location>
</feature>
<feature type="active site" description="For protease activity" evidence="3">
    <location>
        <position position="396"/>
    </location>
</feature>
<feature type="active site" description="For protease activity" evidence="3">
    <location>
        <position position="465"/>
    </location>
</feature>
<feature type="site" description="Cleavage; by viral serine protease" evidence="2">
    <location>
        <begin position="315"/>
        <end position="316"/>
    </location>
</feature>
<feature type="site" description="Cleavage; by viral serine protease" evidence="2">
    <location>
        <begin position="515"/>
        <end position="516"/>
    </location>
</feature>
<feature type="site" description="Cleavage" evidence="2">
    <location>
        <begin position="543"/>
        <end position="544"/>
    </location>
</feature>
<keyword id="KW-0903">Direct protein sequencing</keyword>
<keyword id="KW-0378">Hydrolase</keyword>
<keyword id="KW-0472">Membrane</keyword>
<keyword id="KW-0645">Protease</keyword>
<keyword id="KW-1185">Reference proteome</keyword>
<keyword id="KW-0688">Ribosomal frameshifting</keyword>
<keyword id="KW-0694">RNA-binding</keyword>
<keyword id="KW-0720">Serine protease</keyword>
<keyword id="KW-0732">Signal</keyword>
<keyword id="KW-0812">Transmembrane</keyword>
<keyword id="KW-1133">Transmembrane helix</keyword>
<organism>
    <name type="scientific">Pea enation mosaic virus-1 (strain WSG)</name>
    <name type="common">PEMV-1</name>
    <dbReference type="NCBI Taxonomy" id="693989"/>
    <lineage>
        <taxon>Viruses</taxon>
        <taxon>Riboviria</taxon>
        <taxon>Orthornavirae</taxon>
        <taxon>Pisuviricota</taxon>
        <taxon>Pisoniviricetes</taxon>
        <taxon>Sobelivirales</taxon>
        <taxon>Solemoviridae</taxon>
        <taxon>Enamovirus</taxon>
        <taxon>Pea enation mosaic virus-1</taxon>
    </lineage>
</organism>
<organismHost>
    <name type="scientific">Cicer arietinum</name>
    <name type="common">Chickpea</name>
    <name type="synonym">Garbanzo</name>
    <dbReference type="NCBI Taxonomy" id="3827"/>
</organismHost>
<organismHost>
    <name type="scientific">Lathyrus odoratus</name>
    <name type="common">Sweet pea</name>
    <dbReference type="NCBI Taxonomy" id="3859"/>
</organismHost>
<organismHost>
    <name type="scientific">Lens culinaris</name>
    <name type="common">Lentil</name>
    <name type="synonym">Cicer lens</name>
    <dbReference type="NCBI Taxonomy" id="3864"/>
</organismHost>
<organismHost>
    <name type="scientific">Medicago arabica</name>
    <dbReference type="NCBI Taxonomy" id="70936"/>
</organismHost>
<organismHost>
    <name type="scientific">Pisum sativum</name>
    <name type="common">Garden pea</name>
    <name type="synonym">Lathyrus oleraceus</name>
    <dbReference type="NCBI Taxonomy" id="3888"/>
</organismHost>
<organismHost>
    <name type="scientific">Trifolium incarnatum</name>
    <name type="common">Crimson clover</name>
    <dbReference type="NCBI Taxonomy" id="60916"/>
</organismHost>
<organismHost>
    <name type="scientific">Vicia faba</name>
    <name type="common">Broad bean</name>
    <name type="synonym">Faba vulgaris</name>
    <dbReference type="NCBI Taxonomy" id="3906"/>
</organismHost>
<organismHost>
    <name type="scientific">Vicia sativa</name>
    <name type="common">Spring vetch</name>
    <name type="synonym">Tare</name>
    <dbReference type="NCBI Taxonomy" id="3908"/>
</organismHost>
<proteinExistence type="evidence at protein level"/>
<comment type="function">
    <text evidence="1">Precursor from which the VPg molecule is probably released at the onset of the RNA synthesis. Essential for virus replication (By similarity).</text>
</comment>
<comment type="subcellular location">
    <subcellularLocation>
        <location evidence="5">Membrane</location>
        <topology evidence="5">Multi-pass membrane protein</topology>
    </subcellularLocation>
</comment>
<comment type="alternative products">
    <event type="ribosomal frameshifting"/>
    <isoform>
        <id>Q84710-1</id>
        <name>Protein P1</name>
        <sequence type="displayed"/>
    </isoform>
    <isoform>
        <id>P29154-1</id>
        <name>RNA-directed RNA polymerase</name>
        <sequence type="external"/>
    </isoform>
</comment>
<comment type="domain">
    <text evidence="1">The C-terminus part of protein P1 and P1-C25 displays RNA-binding properties.</text>
</comment>
<comment type="PTM">
    <text evidence="1">Specific enzymatic cleavages in vivo yield mature proteins. The protease probably cleaves itself and releases the VPg protein (By similarity).</text>
</comment>
<comment type="miscellaneous">
    <molecule>Isoform Protein P1</molecule>
    <text>Produced by conventional translation.</text>
</comment>
<comment type="similarity">
    <text evidence="5">Belongs to the peptidase S39B family.</text>
</comment>
<evidence type="ECO:0000250" key="1"/>
<evidence type="ECO:0000255" key="2"/>
<evidence type="ECO:0000255" key="3">
    <source>
        <dbReference type="PROSITE-ProRule" id="PRU01216"/>
    </source>
</evidence>
<evidence type="ECO:0000256" key="4">
    <source>
        <dbReference type="SAM" id="MobiDB-lite"/>
    </source>
</evidence>
<evidence type="ECO:0000305" key="5"/>
<sequence>MASFLKPVNSQGLWLSLLLAITYLFLLPSAGQSLDPSGIGLAAGCSQSQGGISSFAALPRPCNDSVCTLPDLGWSCQRTAQDTANQQQSPFNHTGHFLTTSGWTWPNWTCSPSQCQLLIHLPTWQIVKQDFLLLLKEWDLLTMCQRCSDLLTKTPGFILRFAGETLILVANLIEFVLVSWSLWLCSVLVYVAQAVPGKFLLYMAAFCTTFWAWPRETASSLIRIVTTPLTLIGFLNKTGIGLISHCLALTWNMFMTWSLLPWVTLMKMMKILITSSRVLTRSGRPKRTSSKSLKHKLKISRAIQKKQGKKTPVEERTIPGVQIKKLREDPPKGVILRCTDQFGDHVGYASAVKLEKGQTGIVLPIHVWTDTVYINGPNGKLKMADFTALYEVTNHDSLIMTSAMAGWGSILGVRPRPLTTIDAVKLKNYSLFTERDGKWYVQAAKCIAPAEGMFRVVSDTRPGDSGLPLFDMKMNVVAVHRGTWPSERFPENRAFAILPVPDLTSSSSPKFTGCETYSEAETAYEMADNFSDGEEILIRTKGQSYRTFIGSNKVALLSIRKLEEELSRGPIGLWADDTEDDESAPRRSGNGLFRSTPEKQSQAKTPSPKVEESAAPPPAPRAEKVRHVRRSEMTPEQKRADNLRRRKAKAAKKTPSTPPKKSKDKAPTLSQVAELVEKAVRAALTVQPRRSRASSKISIGGRNPGRKPQVSIQLDPVPSQSTSVPPKDSQAGESAWLGPRRSYRPVQKSTVGQKQEPRRN</sequence>